<sequence>SGGFDFSFLPQPPQEKGDGKGVGLGPGPMGLMGPRGPPGASFQGPAGEPGEPGQTGPAGARGPAGPPGKAGEDGHPGKPGRPGERGVVGPQGARGFPGTPGLPGFKGIRGHNGLDGLKGQAGAPGVKTGARGLPGERGRVGAPGPAGARGSDGSVGPVGPAGPIGSAGPPGFPGAPGPKGELGPVGNPGPAGPAGPRGEQGLPGVSGPVGPPGKGAAGLPGVAGAPGLPGPRGIPGPVGAVGATGARGLVGEPGPAGSKGESGNKGEPGSAGPQGPPGPSGEEGKRGPSGESGSTGPTGPPGLRGGPGSRGLPGADGRAGVMGPAGSRGASGPAGVRGPSGDTGRPGEPGLMGRGLPGSPGNTGPAGKEGPVGLPGIDGRPGPVGPAGPRGEAGNIGFPGPKGPTGDPGKGEKGHAGLAGNRGAPGPDGNNGAQGPPGLQGVQGGKGEQGPAGPPGFQGLPGPSGTTGEAGKPGERGIHGEFGLPGPAGPRGERGPPGESGAAGPVGPIGSRGPSGPPGPDGNKGEPGVVGAPGTAGPGSGGLPGERGAAGIPGGKGEKGETGLRGEVGTTGRDGARGAPGAVGAPGPAGATGDRGEAGAAGPAGPAGPRGSPGERGEVGPAGPNGFAGPAGAAGQPGAKGERGTKGPKGENGIVGPTGPVGAAGPSGPNGAPGPAGGRGDGGPPGLTGFPGAAGRTGPPGPSGITGPPGPPGAAGKEGLRGPRGDQGPVGRTGETGAGGPPGFAGEKGPSGEPGTAGPPGTAGPQGLLGAPGILGLPGSRGERGLPGVAGAVGEPGPLGISGPPGARGPPGAVGPGVNGAPGEAGRSDGPPGRDGLPGHKGERGYAGNAGPVGAAGAPGPHGTVGPAGKHGNRGEPGPAGSVGPVGAVGPRGPSGPQGVRGDKGEAGDKGPRGLPGLKGHNGLQGLPGLAGQHGDQGSPGPVGPAGPRGPAGPSGPAGKDGRTGHPGAVGPAGVRGSQGSQGPSGPAGPPGPPGPPGASGGGYDFGYEGDFYRA</sequence>
<feature type="chain" id="PRO_0000448463" description="Collagen alpha-2(I) chain">
    <location>
        <begin position="1"/>
        <end position="1015"/>
    </location>
</feature>
<feature type="region of interest" description="Disordered" evidence="2">
    <location>
        <begin position="1"/>
        <end position="1015"/>
    </location>
</feature>
<feature type="compositionally biased region" description="Gly residues" evidence="2">
    <location>
        <begin position="20"/>
        <end position="30"/>
    </location>
</feature>
<feature type="compositionally biased region" description="Low complexity" evidence="2">
    <location>
        <begin position="43"/>
        <end position="69"/>
    </location>
</feature>
<feature type="compositionally biased region" description="Basic and acidic residues" evidence="2">
    <location>
        <begin position="70"/>
        <end position="84"/>
    </location>
</feature>
<feature type="compositionally biased region" description="Low complexity" evidence="2">
    <location>
        <begin position="140"/>
        <end position="169"/>
    </location>
</feature>
<feature type="compositionally biased region" description="Low complexity" evidence="2">
    <location>
        <begin position="194"/>
        <end position="208"/>
    </location>
</feature>
<feature type="compositionally biased region" description="Low complexity" evidence="2">
    <location>
        <begin position="235"/>
        <end position="250"/>
    </location>
</feature>
<feature type="compositionally biased region" description="Gly residues" evidence="2">
    <location>
        <begin position="302"/>
        <end position="311"/>
    </location>
</feature>
<feature type="compositionally biased region" description="Low complexity" evidence="2">
    <location>
        <begin position="324"/>
        <end position="340"/>
    </location>
</feature>
<feature type="compositionally biased region" description="Gly residues" evidence="2">
    <location>
        <begin position="441"/>
        <end position="450"/>
    </location>
</feature>
<feature type="compositionally biased region" description="Low complexity" evidence="2">
    <location>
        <begin position="497"/>
        <end position="514"/>
    </location>
</feature>
<feature type="compositionally biased region" description="Gly residues" evidence="2">
    <location>
        <begin position="534"/>
        <end position="545"/>
    </location>
</feature>
<feature type="compositionally biased region" description="Low complexity" evidence="2">
    <location>
        <begin position="568"/>
        <end position="612"/>
    </location>
</feature>
<feature type="compositionally biased region" description="Low complexity" evidence="2">
    <location>
        <begin position="619"/>
        <end position="639"/>
    </location>
</feature>
<feature type="compositionally biased region" description="Basic and acidic residues" evidence="2">
    <location>
        <begin position="640"/>
        <end position="649"/>
    </location>
</feature>
<feature type="compositionally biased region" description="Low complexity" evidence="2">
    <location>
        <begin position="657"/>
        <end position="670"/>
    </location>
</feature>
<feature type="compositionally biased region" description="Gly residues" evidence="2">
    <location>
        <begin position="674"/>
        <end position="686"/>
    </location>
</feature>
<feature type="compositionally biased region" description="Low complexity" evidence="2">
    <location>
        <begin position="687"/>
        <end position="697"/>
    </location>
</feature>
<feature type="compositionally biased region" description="Gly residues" evidence="2">
    <location>
        <begin position="734"/>
        <end position="743"/>
    </location>
</feature>
<feature type="compositionally biased region" description="Low complexity" evidence="2">
    <location>
        <begin position="751"/>
        <end position="778"/>
    </location>
</feature>
<feature type="compositionally biased region" description="Low complexity" evidence="2">
    <location>
        <begin position="786"/>
        <end position="799"/>
    </location>
</feature>
<feature type="compositionally biased region" description="Low complexity" evidence="2">
    <location>
        <begin position="846"/>
        <end position="868"/>
    </location>
</feature>
<feature type="compositionally biased region" description="Low complexity" evidence="2">
    <location>
        <begin position="877"/>
        <end position="897"/>
    </location>
</feature>
<feature type="compositionally biased region" description="Basic and acidic residues" evidence="2">
    <location>
        <begin position="901"/>
        <end position="912"/>
    </location>
</feature>
<feature type="compositionally biased region" description="Pro residues" evidence="2">
    <location>
        <begin position="987"/>
        <end position="997"/>
    </location>
</feature>
<feature type="modified residue" description="4-hydroxyproline" evidence="1">
    <location>
        <position position="10"/>
    </location>
</feature>
<feature type="modified residue" description="4-hydroxyproline" evidence="1">
    <location>
        <position position="13"/>
    </location>
</feature>
<feature type="modified residue" description="4-hydroxyproline" evidence="1">
    <location>
        <position position="38"/>
    </location>
</feature>
<feature type="modified residue" description="5-hydroxylysine; alternate" evidence="1">
    <location>
        <position position="106"/>
    </location>
</feature>
<feature type="modified residue" description="4-hydroxyproline" evidence="1">
    <location>
        <position position="346"/>
    </location>
</feature>
<feature type="modified residue" description="4-hydroxyproline" evidence="1">
    <location>
        <position position="349"/>
    </location>
</feature>
<feature type="glycosylation site" description="O-linked (Gal...) hydroxylysine; alternate" evidence="1">
    <location>
        <position position="106"/>
    </location>
</feature>
<feature type="unsure residue" description="L or I" evidence="4">
    <location>
        <position position="9"/>
    </location>
</feature>
<feature type="unsure residue" description="L or I" evidence="4">
    <location>
        <position position="24"/>
    </location>
</feature>
<feature type="unsure residue" description="L or I" evidence="4">
    <location>
        <position position="31"/>
    </location>
</feature>
<feature type="unsure residue" description="L or I" evidence="4">
    <location>
        <position position="102"/>
    </location>
</feature>
<feature type="unsure residue" description="I or L" evidence="4">
    <location>
        <position position="108"/>
    </location>
</feature>
<feature type="unsure residue" description="L or I" evidence="4">
    <location>
        <position position="114"/>
    </location>
</feature>
<feature type="unsure residue" description="L or I" evidence="4">
    <location>
        <position position="117"/>
    </location>
</feature>
<feature type="unsure residue" description="L or I" evidence="4">
    <location>
        <position position="133"/>
    </location>
</feature>
<feature type="unsure residue" description="I or L" evidence="4">
    <location>
        <position position="164"/>
    </location>
</feature>
<feature type="unsure residue" description="L or I" evidence="4">
    <location>
        <position position="182"/>
    </location>
</feature>
<feature type="unsure residue" description="L or I" evidence="4">
    <location>
        <position position="202"/>
    </location>
</feature>
<feature type="unsure residue" description="L or I" evidence="4">
    <location>
        <position position="219"/>
    </location>
</feature>
<feature type="unsure residue" description="L or I" evidence="4">
    <location>
        <position position="228"/>
    </location>
</feature>
<feature type="unsure residue" description="I or L" evidence="4">
    <location>
        <position position="234"/>
    </location>
</feature>
<feature type="unsure residue" description="L or I" evidence="4">
    <location>
        <position position="249"/>
    </location>
</feature>
<feature type="unsure residue" description="L or I" evidence="4">
    <location>
        <position position="303"/>
    </location>
</feature>
<feature type="unsure residue" description="L or I" evidence="4">
    <location>
        <position position="312"/>
    </location>
</feature>
<feature type="unsure residue" description="L or I" evidence="4">
    <location>
        <position position="351"/>
    </location>
</feature>
<feature type="unsure residue" description="L or I" evidence="4">
    <location>
        <position position="356"/>
    </location>
</feature>
<feature type="unsure residue" description="L or I" evidence="4">
    <location>
        <position position="374"/>
    </location>
</feature>
<feature type="unsure residue" description="I or L" evidence="4">
    <location>
        <position position="377"/>
    </location>
</feature>
<feature type="unsure residue" description="I or L" evidence="4">
    <location>
        <position position="396"/>
    </location>
</feature>
<feature type="unsure residue" description="L or I" evidence="4">
    <location>
        <position position="418"/>
    </location>
</feature>
<feature type="unsure residue" description="L or I" evidence="4">
    <location>
        <position position="439"/>
    </location>
</feature>
<feature type="unsure residue" description="L or I" evidence="4">
    <location>
        <position position="460"/>
    </location>
</feature>
<feature type="unsure residue" description="I or L" evidence="4">
    <location>
        <position position="478"/>
    </location>
</feature>
<feature type="unsure residue" description="L or I" evidence="4">
    <location>
        <position position="484"/>
    </location>
</feature>
<feature type="unsure residue" description="I or L" evidence="4">
    <location>
        <position position="509"/>
    </location>
</feature>
<feature type="unsure residue" description="L or I" evidence="4">
    <location>
        <position position="543"/>
    </location>
</feature>
<feature type="unsure residue" description="I or L" evidence="4">
    <location>
        <position position="552"/>
    </location>
</feature>
<feature type="unsure residue" description="L or I" evidence="4">
    <location>
        <position position="564"/>
    </location>
</feature>
<feature type="unsure residue" description="I or L" evidence="4">
    <location>
        <position position="654"/>
    </location>
</feature>
<feature type="unsure residue" description="L or I" evidence="4">
    <location>
        <position position="687"/>
    </location>
</feature>
<feature type="unsure residue" description="I or L" evidence="4">
    <location>
        <position position="705"/>
    </location>
</feature>
<feature type="unsure residue" description="L or I" evidence="4">
    <location>
        <position position="720"/>
    </location>
</feature>
<feature type="unsure residue" description="L or I" evidence="4">
    <location>
        <position position="768"/>
    </location>
</feature>
<feature type="unsure residue" description="L or I" evidence="4">
    <location>
        <position position="769"/>
    </location>
</feature>
<feature type="unsure residue" description="I or L" evidence="4">
    <location>
        <position position="774"/>
    </location>
</feature>
<feature type="unsure residue" description="L or I" evidence="4">
    <location>
        <position position="775"/>
    </location>
</feature>
<feature type="unsure residue" description="L or I" evidence="4">
    <location>
        <position position="777"/>
    </location>
</feature>
<feature type="unsure residue" description="L or I" evidence="4">
    <location>
        <position position="786"/>
    </location>
</feature>
<feature type="unsure residue" description="L or I" evidence="4">
    <location>
        <position position="799"/>
    </location>
</feature>
<feature type="unsure residue" description="I or L" evidence="4">
    <location>
        <position position="801"/>
    </location>
</feature>
<feature type="unsure residue" description="L or I" evidence="4">
    <location>
        <position position="837"/>
    </location>
</feature>
<feature type="unsure residue" description="L or I" evidence="4">
    <location>
        <position position="915"/>
    </location>
</feature>
<feature type="unsure residue" description="L or I" evidence="4">
    <location>
        <position position="918"/>
    </location>
</feature>
<feature type="unsure residue" description="L or I" evidence="4">
    <location>
        <position position="924"/>
    </location>
</feature>
<feature type="unsure residue" description="L or I" evidence="4">
    <location>
        <position position="927"/>
    </location>
</feature>
<feature type="unsure residue" description="L or I" evidence="4">
    <location>
        <position position="930"/>
    </location>
</feature>
<feature type="non-consecutive residues" evidence="4">
    <location>
        <begin position="17"/>
        <end position="18"/>
    </location>
</feature>
<feature type="non-consecutive residues" evidence="4">
    <location>
        <begin position="41"/>
        <end position="42"/>
    </location>
</feature>
<feature type="non-consecutive residues" evidence="4">
    <location>
        <begin position="127"/>
        <end position="128"/>
    </location>
</feature>
<feature type="non-consecutive residues" evidence="4">
    <location>
        <begin position="213"/>
        <end position="214"/>
    </location>
</feature>
<feature type="non-consecutive residues" evidence="4">
    <location>
        <begin position="353"/>
        <end position="354"/>
    </location>
</feature>
<feature type="non-consecutive residues" evidence="4">
    <location>
        <begin position="410"/>
        <end position="411"/>
    </location>
</feature>
<feature type="non-consecutive residues" evidence="4">
    <location>
        <begin position="538"/>
        <end position="539"/>
    </location>
</feature>
<feature type="non-consecutive residues" evidence="4">
    <location>
        <begin position="815"/>
        <end position="816"/>
    </location>
</feature>
<feature type="non-consecutive residues" evidence="4">
    <location>
        <begin position="827"/>
        <end position="828"/>
    </location>
</feature>
<feature type="non-terminal residue" evidence="4">
    <location>
        <position position="1"/>
    </location>
</feature>
<feature type="non-terminal residue" evidence="4">
    <location>
        <position position="1015"/>
    </location>
</feature>
<organism evidence="4">
    <name type="scientific">Doedicurus sp.</name>
    <name type="common">South American giant glyptodont</name>
    <dbReference type="NCBI Taxonomy" id="1849957"/>
    <lineage>
        <taxon>Eukaryota</taxon>
        <taxon>Metazoa</taxon>
        <taxon>Chordata</taxon>
        <taxon>Craniata</taxon>
        <taxon>Vertebrata</taxon>
        <taxon>Euteleostomi</taxon>
        <taxon>Mammalia</taxon>
        <taxon>Eutheria</taxon>
        <taxon>Xenarthra</taxon>
        <taxon>Cingulata</taxon>
        <taxon>Chlamyphoridae</taxon>
        <taxon>Doedicurus</taxon>
    </lineage>
</organism>
<dbReference type="GO" id="GO:0031012">
    <property type="term" value="C:extracellular matrix"/>
    <property type="evidence" value="ECO:0007669"/>
    <property type="project" value="TreeGrafter"/>
</dbReference>
<dbReference type="GO" id="GO:0005615">
    <property type="term" value="C:extracellular space"/>
    <property type="evidence" value="ECO:0007669"/>
    <property type="project" value="TreeGrafter"/>
</dbReference>
<dbReference type="InterPro" id="IPR008160">
    <property type="entry name" value="Collagen"/>
</dbReference>
<dbReference type="InterPro" id="IPR050149">
    <property type="entry name" value="Collagen_superfamily"/>
</dbReference>
<dbReference type="PANTHER" id="PTHR24023">
    <property type="entry name" value="COLLAGEN ALPHA"/>
    <property type="match status" value="1"/>
</dbReference>
<dbReference type="PANTHER" id="PTHR24023:SF1082">
    <property type="entry name" value="COLLAGEN TRIPLE HELIX REPEAT"/>
    <property type="match status" value="1"/>
</dbReference>
<dbReference type="Pfam" id="PF01391">
    <property type="entry name" value="Collagen"/>
    <property type="match status" value="7"/>
</dbReference>
<name>CO1A2_DOESX</name>
<accession>C0HLI2</accession>
<evidence type="ECO:0000250" key="1">
    <source>
        <dbReference type="UniProtKB" id="P08123"/>
    </source>
</evidence>
<evidence type="ECO:0000256" key="2">
    <source>
        <dbReference type="SAM" id="MobiDB-lite"/>
    </source>
</evidence>
<evidence type="ECO:0000269" key="3">
    <source>
    </source>
</evidence>
<evidence type="ECO:0000303" key="4">
    <source>
    </source>
</evidence>
<evidence type="ECO:0000305" key="5"/>
<proteinExistence type="evidence at protein level"/>
<comment type="function">
    <text evidence="5">Type I collagen is a member of group I collagen (fibrillar forming collagen).</text>
</comment>
<comment type="subunit">
    <text evidence="1">Trimers of one alpha 2(I) and two alpha 1(I) chains. Interacts (via C-terminus) with TMEM131 (via PapD-L domain); the interaction is direct and is involved in assembly and TRAPPIII ER-to-Golgi transport complex-dependent secretion of collagen.</text>
</comment>
<comment type="subcellular location">
    <subcellularLocation>
        <location>Secreted</location>
    </subcellularLocation>
    <subcellularLocation>
        <location>Secreted</location>
        <location>Extracellular space</location>
    </subcellularLocation>
    <subcellularLocation>
        <location evidence="5">Secreted</location>
        <location evidence="5">Extracellular space</location>
        <location evidence="5">Extracellular matrix</location>
    </subcellularLocation>
</comment>
<comment type="tissue specificity">
    <text evidence="3">Expressed in bones.</text>
</comment>
<comment type="PTM">
    <text evidence="1">Prolines at the third position of the tripeptide repeating unit (G-X-Y) are hydroxylated in some or all of the chains.</text>
</comment>
<comment type="miscellaneous">
    <text evidence="3">These protein fragments were extracted from an ancient scute bone collected at Camet Norte in Argentina.</text>
</comment>
<comment type="similarity">
    <text evidence="5">Belongs to the fibrillar collagen family.</text>
</comment>
<protein>
    <recommendedName>
        <fullName evidence="4">Collagen alpha-2(I) chain</fullName>
    </recommendedName>
    <alternativeName>
        <fullName evidence="1">Alpha-2 type I collagen</fullName>
    </alternativeName>
</protein>
<reference evidence="5" key="1">
    <citation type="journal article" date="2019" name="Nat. Ecol. Evol.">
        <title>Palaeoproteomics resolves sloth relationships.</title>
        <authorList>
            <person name="Presslee S."/>
            <person name="Slater G.J."/>
            <person name="Pujos F."/>
            <person name="Forasiepi A.M."/>
            <person name="Fischer R."/>
            <person name="Molloy K."/>
            <person name="Mackie M."/>
            <person name="Olsen J.V."/>
            <person name="Kramarz A."/>
            <person name="Taglioretti M."/>
            <person name="Scaglia F."/>
            <person name="Lezcano M."/>
            <person name="Lanata J.L."/>
            <person name="Southon J."/>
            <person name="Feranec R."/>
            <person name="Bloch J."/>
            <person name="Hajduk A."/>
            <person name="Martin F.M."/>
            <person name="Salas Gismondi R."/>
            <person name="Reguero M."/>
            <person name="de Muizon C."/>
            <person name="Greenwood A."/>
            <person name="Chait B.T."/>
            <person name="Penkman K."/>
            <person name="Collins M."/>
            <person name="MacPhee R.D.E."/>
        </authorList>
    </citation>
    <scope>PROTEIN SEQUENCE</scope>
    <scope>TISSUE SPECIFICITY</scope>
    <scope>IDENTIFICATION BY MASS SPECTROMETRY</scope>
    <source>
        <tissue evidence="4">Bone</tissue>
    </source>
</reference>
<keyword id="KW-0903">Direct protein sequencing</keyword>
<keyword id="KW-0952">Extinct organism protein</keyword>
<keyword id="KW-0272">Extracellular matrix</keyword>
<keyword id="KW-0325">Glycoprotein</keyword>
<keyword id="KW-0379">Hydroxylation</keyword>
<keyword id="KW-0964">Secreted</keyword>